<comment type="function">
    <text evidence="1">Assembles around the rod to form the L-ring and probably protects the motor/basal body from shearing forces during rotation.</text>
</comment>
<comment type="subunit">
    <text evidence="1">The basal body constitutes a major portion of the flagellar organelle and consists of four rings (L,P,S, and M) mounted on a central rod.</text>
</comment>
<comment type="subcellular location">
    <subcellularLocation>
        <location evidence="1">Periplasm</location>
    </subcellularLocation>
    <subcellularLocation>
        <location evidence="1">Bacterial flagellum basal body</location>
    </subcellularLocation>
</comment>
<comment type="similarity">
    <text evidence="1">Belongs to the FlgI family.</text>
</comment>
<name>FLGI_NITOC</name>
<dbReference type="EMBL" id="CP000127">
    <property type="protein sequence ID" value="ABA58829.1"/>
    <property type="molecule type" value="Genomic_DNA"/>
</dbReference>
<dbReference type="RefSeq" id="WP_002808975.1">
    <property type="nucleotide sequence ID" value="NC_007484.1"/>
</dbReference>
<dbReference type="SMR" id="Q3J8L7"/>
<dbReference type="FunCoup" id="Q3J8L7">
    <property type="interactions" value="61"/>
</dbReference>
<dbReference type="STRING" id="323261.Noc_2371"/>
<dbReference type="KEGG" id="noc:Noc_2371"/>
<dbReference type="eggNOG" id="COG1706">
    <property type="taxonomic scope" value="Bacteria"/>
</dbReference>
<dbReference type="HOGENOM" id="CLU_045235_1_0_6"/>
<dbReference type="InParanoid" id="Q3J8L7"/>
<dbReference type="Proteomes" id="UP000006838">
    <property type="component" value="Chromosome"/>
</dbReference>
<dbReference type="GO" id="GO:0009428">
    <property type="term" value="C:bacterial-type flagellum basal body, distal rod, P ring"/>
    <property type="evidence" value="ECO:0007669"/>
    <property type="project" value="InterPro"/>
</dbReference>
<dbReference type="GO" id="GO:0030288">
    <property type="term" value="C:outer membrane-bounded periplasmic space"/>
    <property type="evidence" value="ECO:0007669"/>
    <property type="project" value="InterPro"/>
</dbReference>
<dbReference type="GO" id="GO:0005198">
    <property type="term" value="F:structural molecule activity"/>
    <property type="evidence" value="ECO:0007669"/>
    <property type="project" value="InterPro"/>
</dbReference>
<dbReference type="GO" id="GO:0071973">
    <property type="term" value="P:bacterial-type flagellum-dependent cell motility"/>
    <property type="evidence" value="ECO:0007669"/>
    <property type="project" value="InterPro"/>
</dbReference>
<dbReference type="HAMAP" id="MF_00416">
    <property type="entry name" value="FlgI"/>
    <property type="match status" value="1"/>
</dbReference>
<dbReference type="InterPro" id="IPR001782">
    <property type="entry name" value="Flag_FlgI"/>
</dbReference>
<dbReference type="NCBIfam" id="NF003676">
    <property type="entry name" value="PRK05303.1"/>
    <property type="match status" value="1"/>
</dbReference>
<dbReference type="PANTHER" id="PTHR30381">
    <property type="entry name" value="FLAGELLAR P-RING PERIPLASMIC PROTEIN FLGI"/>
    <property type="match status" value="1"/>
</dbReference>
<dbReference type="PANTHER" id="PTHR30381:SF0">
    <property type="entry name" value="FLAGELLAR P-RING PROTEIN"/>
    <property type="match status" value="1"/>
</dbReference>
<dbReference type="Pfam" id="PF02119">
    <property type="entry name" value="FlgI"/>
    <property type="match status" value="1"/>
</dbReference>
<dbReference type="PRINTS" id="PR01010">
    <property type="entry name" value="FLGPRINGFLGI"/>
</dbReference>
<evidence type="ECO:0000255" key="1">
    <source>
        <dbReference type="HAMAP-Rule" id="MF_00416"/>
    </source>
</evidence>
<proteinExistence type="inferred from homology"/>
<organism>
    <name type="scientific">Nitrosococcus oceani (strain ATCC 19707 / BCRC 17464 / JCM 30415 / NCIMB 11848 / C-107)</name>
    <dbReference type="NCBI Taxonomy" id="323261"/>
    <lineage>
        <taxon>Bacteria</taxon>
        <taxon>Pseudomonadati</taxon>
        <taxon>Pseudomonadota</taxon>
        <taxon>Gammaproteobacteria</taxon>
        <taxon>Chromatiales</taxon>
        <taxon>Chromatiaceae</taxon>
        <taxon>Nitrosococcus</taxon>
    </lineage>
</organism>
<keyword id="KW-0975">Bacterial flagellum</keyword>
<keyword id="KW-0574">Periplasm</keyword>
<keyword id="KW-1185">Reference proteome</keyword>
<keyword id="KW-0732">Signal</keyword>
<protein>
    <recommendedName>
        <fullName evidence="1">Flagellar P-ring protein</fullName>
    </recommendedName>
    <alternativeName>
        <fullName evidence="1">Basal body P-ring protein</fullName>
    </alternativeName>
</protein>
<sequence length="367" mass="37869">MKIIQTFFIITLLWLSQGVQAERVKDLAAIAGVRSNQLVGYGLVVGLSGTGDQVTQISYTRQSLRNMLREFGIIMPPGVNLQPKNVAAVSIHAQLPPFAKPGQSIDITVSSLGNAKSLRGGSLLLTPLKGADGRVYAMAQGNLIVGGFGAEGNDGSRVTVNIPSTGRIPNGATVERGVPNPFNNGGPIILNLHAADFTTANRVAAAINSAIGAGTARPLDGASIQVNAPAVPAQRVSFVSLLENLEVDPGEAPAKIVINSRTGTVVIGQHVRVQPAAVSHGRLTVTITANPAISQPPPLSGGQTAVVPRTDIDIQEEGSRMFLFAPGVSLGEIVRAVNQVGAAPGDLVAILEALKQVGALSAELVVL</sequence>
<accession>Q3J8L7</accession>
<gene>
    <name evidence="1" type="primary">flgI</name>
    <name type="ordered locus">Noc_2371</name>
</gene>
<feature type="signal peptide" evidence="1">
    <location>
        <begin position="1"/>
        <end position="21"/>
    </location>
</feature>
<feature type="chain" id="PRO_0000236306" description="Flagellar P-ring protein">
    <location>
        <begin position="22"/>
        <end position="367"/>
    </location>
</feature>
<reference key="1">
    <citation type="journal article" date="2006" name="Appl. Environ. Microbiol.">
        <title>Complete genome sequence of the marine, chemolithoautotrophic, ammonia-oxidizing bacterium Nitrosococcus oceani ATCC 19707.</title>
        <authorList>
            <person name="Klotz M.G."/>
            <person name="Arp D.J."/>
            <person name="Chain P.S.G."/>
            <person name="El-Sheikh A.F."/>
            <person name="Hauser L.J."/>
            <person name="Hommes N.G."/>
            <person name="Larimer F.W."/>
            <person name="Malfatti S.A."/>
            <person name="Norton J.M."/>
            <person name="Poret-Peterson A.T."/>
            <person name="Vergez L.M."/>
            <person name="Ward B.B."/>
        </authorList>
    </citation>
    <scope>NUCLEOTIDE SEQUENCE [LARGE SCALE GENOMIC DNA]</scope>
    <source>
        <strain>ATCC 19707 / BCRC 17464 / JCM 30415 / NCIMB 11848 / C-107</strain>
    </source>
</reference>